<feature type="chain" id="PRO_0000331358" description="PC-esterase domain-containing protein 1B">
    <location>
        <begin position="1"/>
        <end position="432"/>
    </location>
</feature>
<feature type="region of interest" description="Disordered" evidence="1">
    <location>
        <begin position="273"/>
        <end position="312"/>
    </location>
</feature>
<feature type="region of interest" description="Disordered" evidence="1">
    <location>
        <begin position="407"/>
        <end position="432"/>
    </location>
</feature>
<feature type="compositionally biased region" description="Polar residues" evidence="1">
    <location>
        <begin position="285"/>
        <end position="294"/>
    </location>
</feature>
<feature type="compositionally biased region" description="Pro residues" evidence="1">
    <location>
        <begin position="296"/>
        <end position="312"/>
    </location>
</feature>
<dbReference type="EMBL" id="BC112322">
    <property type="protein sequence ID" value="AAI12323.1"/>
    <property type="molecule type" value="mRNA"/>
</dbReference>
<dbReference type="RefSeq" id="NP_001034543.1">
    <property type="nucleotide sequence ID" value="NM_001039454.1"/>
</dbReference>
<dbReference type="RefSeq" id="XP_008763961.1">
    <property type="nucleotide sequence ID" value="XM_008765739.2"/>
</dbReference>
<dbReference type="RefSeq" id="XP_008763962.1">
    <property type="nucleotide sequence ID" value="XM_008765740.4"/>
</dbReference>
<dbReference type="RefSeq" id="XP_008763964.1">
    <property type="nucleotide sequence ID" value="XM_008765742.4"/>
</dbReference>
<dbReference type="RefSeq" id="XP_008763965.1">
    <property type="nucleotide sequence ID" value="XM_008765743.2"/>
</dbReference>
<dbReference type="RefSeq" id="XP_008763966.1">
    <property type="nucleotide sequence ID" value="XM_008765744.2"/>
</dbReference>
<dbReference type="RefSeq" id="XP_063119730.1">
    <property type="nucleotide sequence ID" value="XM_063263660.1"/>
</dbReference>
<dbReference type="RefSeq" id="XP_063119731.1">
    <property type="nucleotide sequence ID" value="XM_063263661.1"/>
</dbReference>
<dbReference type="RefSeq" id="XP_063119732.1">
    <property type="nucleotide sequence ID" value="XM_063263662.1"/>
</dbReference>
<dbReference type="RefSeq" id="XP_063119733.1">
    <property type="nucleotide sequence ID" value="XM_063263663.1"/>
</dbReference>
<dbReference type="RefSeq" id="XP_063119734.1">
    <property type="nucleotide sequence ID" value="XM_063263664.1"/>
</dbReference>
<dbReference type="RefSeq" id="XP_063119735.1">
    <property type="nucleotide sequence ID" value="XM_063263665.1"/>
</dbReference>
<dbReference type="RefSeq" id="XP_063119736.1">
    <property type="nucleotide sequence ID" value="XM_063263666.1"/>
</dbReference>
<dbReference type="RefSeq" id="XP_063119737.1">
    <property type="nucleotide sequence ID" value="XM_063263667.1"/>
</dbReference>
<dbReference type="FunCoup" id="Q2M1K5">
    <property type="interactions" value="933"/>
</dbReference>
<dbReference type="STRING" id="10116.ENSRNOP00000035198"/>
<dbReference type="iPTMnet" id="Q2M1K5"/>
<dbReference type="PhosphoSitePlus" id="Q2M1K5"/>
<dbReference type="PaxDb" id="10116-ENSRNOP00000035198"/>
<dbReference type="Ensembl" id="ENSRNOT00000009199.4">
    <property type="protein sequence ID" value="ENSRNOP00000009199.3"/>
    <property type="gene ID" value="ENSRNOG00000022807.6"/>
</dbReference>
<dbReference type="Ensembl" id="ENSRNOT00000037874.6">
    <property type="protein sequence ID" value="ENSRNOP00000035198.4"/>
    <property type="gene ID" value="ENSRNOG00000022807.6"/>
</dbReference>
<dbReference type="Ensembl" id="ENSRNOT00000105071.1">
    <property type="protein sequence ID" value="ENSRNOP00000097051.1"/>
    <property type="gene ID" value="ENSRNOG00000022807.6"/>
</dbReference>
<dbReference type="Ensembl" id="ENSRNOT00000107243.1">
    <property type="protein sequence ID" value="ENSRNOP00000091999.1"/>
    <property type="gene ID" value="ENSRNOG00000022807.6"/>
</dbReference>
<dbReference type="Ensembl" id="ENSRNOT00000109503.1">
    <property type="protein sequence ID" value="ENSRNOP00000077090.1"/>
    <property type="gene ID" value="ENSRNOG00000022807.6"/>
</dbReference>
<dbReference type="Ensembl" id="ENSRNOT00000110065.1">
    <property type="protein sequence ID" value="ENSRNOP00000092537.1"/>
    <property type="gene ID" value="ENSRNOG00000022807.6"/>
</dbReference>
<dbReference type="Ensembl" id="ENSRNOT00000111212.1">
    <property type="protein sequence ID" value="ENSRNOP00000095524.1"/>
    <property type="gene ID" value="ENSRNOG00000022807.6"/>
</dbReference>
<dbReference type="Ensembl" id="ENSRNOT00000118269.1">
    <property type="protein sequence ID" value="ENSRNOP00000079128.1"/>
    <property type="gene ID" value="ENSRNOG00000022807.6"/>
</dbReference>
<dbReference type="GeneID" id="315283"/>
<dbReference type="KEGG" id="rno:315283"/>
<dbReference type="AGR" id="RGD:1561028"/>
<dbReference type="CTD" id="91523"/>
<dbReference type="RGD" id="1561028">
    <property type="gene designation" value="Pced1b"/>
</dbReference>
<dbReference type="eggNOG" id="ENOG502QVBZ">
    <property type="taxonomic scope" value="Eukaryota"/>
</dbReference>
<dbReference type="GeneTree" id="ENSGT00390000002231"/>
<dbReference type="HOGENOM" id="CLU_053865_0_0_1"/>
<dbReference type="InParanoid" id="Q2M1K5"/>
<dbReference type="OMA" id="YFHSDVP"/>
<dbReference type="PhylomeDB" id="Q2M1K5"/>
<dbReference type="TreeFam" id="TF328972"/>
<dbReference type="PRO" id="PR:Q2M1K5"/>
<dbReference type="Proteomes" id="UP000002494">
    <property type="component" value="Chromosome 7"/>
</dbReference>
<dbReference type="Bgee" id="ENSRNOG00000022807">
    <property type="expression patterns" value="Expressed in spleen and 19 other cell types or tissues"/>
</dbReference>
<dbReference type="Gene3D" id="3.40.50.1110">
    <property type="entry name" value="SGNH hydrolase"/>
    <property type="match status" value="1"/>
</dbReference>
<dbReference type="InterPro" id="IPR036514">
    <property type="entry name" value="SGNH_hydro_sf"/>
</dbReference>
<dbReference type="PANTHER" id="PTHR14469:SF1">
    <property type="entry name" value="PC-ESTERASE DOMAIN-CONTAINING PROTEIN 1B"/>
    <property type="match status" value="1"/>
</dbReference>
<dbReference type="PANTHER" id="PTHR14469">
    <property type="entry name" value="SARCOMA ANTIGEN NY-SAR-23"/>
    <property type="match status" value="1"/>
</dbReference>
<dbReference type="SUPFAM" id="SSF52266">
    <property type="entry name" value="SGNH hydrolase"/>
    <property type="match status" value="1"/>
</dbReference>
<comment type="similarity">
    <text evidence="2">Belongs to the PC-esterase family.</text>
</comment>
<gene>
    <name type="primary">Pced1b</name>
    <name type="synonym">Fam113b</name>
</gene>
<name>PED1B_RAT</name>
<protein>
    <recommendedName>
        <fullName>PC-esterase domain-containing protein 1B</fullName>
    </recommendedName>
    <alternativeName>
        <fullName>Protein FAM113B</fullName>
    </alternativeName>
</protein>
<accession>Q2M1K5</accession>
<reference key="1">
    <citation type="journal article" date="2004" name="Genome Res.">
        <title>The status, quality, and expansion of the NIH full-length cDNA project: the Mammalian Gene Collection (MGC).</title>
        <authorList>
            <consortium name="The MGC Project Team"/>
        </authorList>
    </citation>
    <scope>NUCLEOTIDE SEQUENCE [LARGE SCALE MRNA]</scope>
    <source>
        <tissue>Prostate</tissue>
    </source>
</reference>
<proteinExistence type="evidence at transcript level"/>
<sequence>MVRLLASEVQQLLHNKFVVVLGDSVHRAVYKDLVLLLQKDCLLTNKQLRTKGELSFEKDQLMMGGELDTLHNRTDYREVREFCSDHHLVRFYFLTRVYSEYMESVLKELQSGNHAPDVIIMNSCLWDVSRYGRNSLSSYRQNLENLFGRMDEVLPKSCLLVWNTAMPLGDKIKAAFLPQKCKGQYPRISVATLKKKVTQANFYSHAEATKHYFDVLDLNFHFRQARKHLQGDGVHWNEHAHRKLSYLLLAHMADAWGVELPHRDPWEPGFEAWESSGQVEERQPQDNIGPQFAQSPPYPFPRPPPLLPSPGLPIRPPPLLGCPLPPPQPMPPLPLYPQVSYFSSDPVFQSDEFYIHSDSPSSNHTGYAFEGDFSFYPQPPMPNFRPPCHQRQAPVVHRGFPRHFPRGPYMPWRERPRRPQKHAPACLESRPQ</sequence>
<keyword id="KW-1185">Reference proteome</keyword>
<evidence type="ECO:0000256" key="1">
    <source>
        <dbReference type="SAM" id="MobiDB-lite"/>
    </source>
</evidence>
<evidence type="ECO:0000305" key="2"/>
<organism>
    <name type="scientific">Rattus norvegicus</name>
    <name type="common">Rat</name>
    <dbReference type="NCBI Taxonomy" id="10116"/>
    <lineage>
        <taxon>Eukaryota</taxon>
        <taxon>Metazoa</taxon>
        <taxon>Chordata</taxon>
        <taxon>Craniata</taxon>
        <taxon>Vertebrata</taxon>
        <taxon>Euteleostomi</taxon>
        <taxon>Mammalia</taxon>
        <taxon>Eutheria</taxon>
        <taxon>Euarchontoglires</taxon>
        <taxon>Glires</taxon>
        <taxon>Rodentia</taxon>
        <taxon>Myomorpha</taxon>
        <taxon>Muroidea</taxon>
        <taxon>Muridae</taxon>
        <taxon>Murinae</taxon>
        <taxon>Rattus</taxon>
    </lineage>
</organism>